<proteinExistence type="inferred from homology"/>
<gene>
    <name evidence="1" type="primary">rpmE2</name>
    <name type="ordered locus">BCA_5480</name>
</gene>
<reference key="1">
    <citation type="submission" date="2009-02" db="EMBL/GenBank/DDBJ databases">
        <title>Genome sequence of Bacillus cereus 03BB102.</title>
        <authorList>
            <person name="Dodson R.J."/>
            <person name="Jackson P."/>
            <person name="Munk A.C."/>
            <person name="Brettin T."/>
            <person name="Bruce D."/>
            <person name="Detter C."/>
            <person name="Tapia R."/>
            <person name="Han C."/>
            <person name="Sutton G."/>
            <person name="Sims D."/>
        </authorList>
    </citation>
    <scope>NUCLEOTIDE SEQUENCE [LARGE SCALE GENOMIC DNA]</scope>
    <source>
        <strain>03BB102</strain>
    </source>
</reference>
<keyword id="KW-0687">Ribonucleoprotein</keyword>
<keyword id="KW-0689">Ribosomal protein</keyword>
<sequence length="81" mass="9184">MKAGIHPDYKKVVFMDTNTGFKFLSGSTKGSNETVEWEDGNTYPLLKVEISSDSHPFYTGRQKFATADGRVDRFNKKYGLK</sequence>
<organism>
    <name type="scientific">Bacillus cereus (strain 03BB102)</name>
    <dbReference type="NCBI Taxonomy" id="572264"/>
    <lineage>
        <taxon>Bacteria</taxon>
        <taxon>Bacillati</taxon>
        <taxon>Bacillota</taxon>
        <taxon>Bacilli</taxon>
        <taxon>Bacillales</taxon>
        <taxon>Bacillaceae</taxon>
        <taxon>Bacillus</taxon>
        <taxon>Bacillus cereus group</taxon>
    </lineage>
</organism>
<protein>
    <recommendedName>
        <fullName evidence="1">Large ribosomal subunit protein bL31B</fullName>
    </recommendedName>
    <alternativeName>
        <fullName evidence="2">50S ribosomal protein L31 type B</fullName>
    </alternativeName>
</protein>
<name>RL31B_BACC3</name>
<comment type="subunit">
    <text evidence="1">Part of the 50S ribosomal subunit.</text>
</comment>
<comment type="similarity">
    <text evidence="1">Belongs to the bacterial ribosomal protein bL31 family. Type B subfamily.</text>
</comment>
<evidence type="ECO:0000255" key="1">
    <source>
        <dbReference type="HAMAP-Rule" id="MF_00502"/>
    </source>
</evidence>
<evidence type="ECO:0000305" key="2"/>
<accession>C1F0Q8</accession>
<dbReference type="EMBL" id="CP001407">
    <property type="protein sequence ID" value="ACO28940.1"/>
    <property type="molecule type" value="Genomic_DNA"/>
</dbReference>
<dbReference type="RefSeq" id="WP_000643433.1">
    <property type="nucleotide sequence ID" value="NZ_CP009318.1"/>
</dbReference>
<dbReference type="SMR" id="C1F0Q8"/>
<dbReference type="KEGG" id="bcx:BCA_5480"/>
<dbReference type="PATRIC" id="fig|572264.18.peg.5402"/>
<dbReference type="Proteomes" id="UP000002210">
    <property type="component" value="Chromosome"/>
</dbReference>
<dbReference type="GO" id="GO:1990904">
    <property type="term" value="C:ribonucleoprotein complex"/>
    <property type="evidence" value="ECO:0007669"/>
    <property type="project" value="UniProtKB-KW"/>
</dbReference>
<dbReference type="GO" id="GO:0005840">
    <property type="term" value="C:ribosome"/>
    <property type="evidence" value="ECO:0007669"/>
    <property type="project" value="UniProtKB-KW"/>
</dbReference>
<dbReference type="GO" id="GO:0003735">
    <property type="term" value="F:structural constituent of ribosome"/>
    <property type="evidence" value="ECO:0007669"/>
    <property type="project" value="InterPro"/>
</dbReference>
<dbReference type="GO" id="GO:0006412">
    <property type="term" value="P:translation"/>
    <property type="evidence" value="ECO:0007669"/>
    <property type="project" value="UniProtKB-UniRule"/>
</dbReference>
<dbReference type="Gene3D" id="4.10.830.30">
    <property type="entry name" value="Ribosomal protein L31"/>
    <property type="match status" value="1"/>
</dbReference>
<dbReference type="HAMAP" id="MF_00502">
    <property type="entry name" value="Ribosomal_bL31_2"/>
    <property type="match status" value="1"/>
</dbReference>
<dbReference type="InterPro" id="IPR034704">
    <property type="entry name" value="Ribosomal_bL28/bL31-like_sf"/>
</dbReference>
<dbReference type="InterPro" id="IPR002150">
    <property type="entry name" value="Ribosomal_bL31"/>
</dbReference>
<dbReference type="InterPro" id="IPR027493">
    <property type="entry name" value="Ribosomal_bL31_B"/>
</dbReference>
<dbReference type="InterPro" id="IPR042105">
    <property type="entry name" value="Ribosomal_bL31_sf"/>
</dbReference>
<dbReference type="NCBIfam" id="TIGR00105">
    <property type="entry name" value="L31"/>
    <property type="match status" value="1"/>
</dbReference>
<dbReference type="NCBIfam" id="NF002462">
    <property type="entry name" value="PRK01678.1"/>
    <property type="match status" value="1"/>
</dbReference>
<dbReference type="PANTHER" id="PTHR33280">
    <property type="entry name" value="50S RIBOSOMAL PROTEIN L31, CHLOROPLASTIC"/>
    <property type="match status" value="1"/>
</dbReference>
<dbReference type="PANTHER" id="PTHR33280:SF1">
    <property type="entry name" value="LARGE RIBOSOMAL SUBUNIT PROTEIN BL31C"/>
    <property type="match status" value="1"/>
</dbReference>
<dbReference type="Pfam" id="PF01197">
    <property type="entry name" value="Ribosomal_L31"/>
    <property type="match status" value="1"/>
</dbReference>
<dbReference type="PRINTS" id="PR01249">
    <property type="entry name" value="RIBOSOMALL31"/>
</dbReference>
<dbReference type="SUPFAM" id="SSF143800">
    <property type="entry name" value="L28p-like"/>
    <property type="match status" value="1"/>
</dbReference>
<dbReference type="PROSITE" id="PS01143">
    <property type="entry name" value="RIBOSOMAL_L31"/>
    <property type="match status" value="1"/>
</dbReference>
<feature type="chain" id="PRO_1000176982" description="Large ribosomal subunit protein bL31B">
    <location>
        <begin position="1"/>
        <end position="81"/>
    </location>
</feature>